<evidence type="ECO:0000255" key="1">
    <source>
        <dbReference type="PROSITE-ProRule" id="PRU00497"/>
    </source>
</evidence>
<evidence type="ECO:0000269" key="2">
    <source>
    </source>
</evidence>
<dbReference type="GO" id="GO:0062129">
    <property type="term" value="C:chitin-based extracellular matrix"/>
    <property type="evidence" value="ECO:0007669"/>
    <property type="project" value="TreeGrafter"/>
</dbReference>
<dbReference type="GO" id="GO:0008010">
    <property type="term" value="F:structural constituent of chitin-based larval cuticle"/>
    <property type="evidence" value="ECO:0007669"/>
    <property type="project" value="TreeGrafter"/>
</dbReference>
<dbReference type="InterPro" id="IPR031311">
    <property type="entry name" value="CHIT_BIND_RR_consensus"/>
</dbReference>
<dbReference type="InterPro" id="IPR050468">
    <property type="entry name" value="Cuticle_Struct_Prot"/>
</dbReference>
<dbReference type="InterPro" id="IPR000618">
    <property type="entry name" value="Insect_cuticle"/>
</dbReference>
<dbReference type="PANTHER" id="PTHR10380">
    <property type="entry name" value="CUTICLE PROTEIN"/>
    <property type="match status" value="1"/>
</dbReference>
<dbReference type="PANTHER" id="PTHR10380:SF173">
    <property type="entry name" value="CUTICULAR PROTEIN 47EF, ISOFORM C-RELATED"/>
    <property type="match status" value="1"/>
</dbReference>
<dbReference type="Pfam" id="PF00379">
    <property type="entry name" value="Chitin_bind_4"/>
    <property type="match status" value="1"/>
</dbReference>
<dbReference type="PRINTS" id="PR00947">
    <property type="entry name" value="CUTICLE"/>
</dbReference>
<dbReference type="PROSITE" id="PS00233">
    <property type="entry name" value="CHIT_BIND_RR_1"/>
    <property type="match status" value="1"/>
</dbReference>
<dbReference type="PROSITE" id="PS51155">
    <property type="entry name" value="CHIT_BIND_RR_2"/>
    <property type="match status" value="1"/>
</dbReference>
<name>CU57_ARADI</name>
<organism>
    <name type="scientific">Araneus diadematus</name>
    <name type="common">European garden spider</name>
    <name type="synonym">Cross spider</name>
    <dbReference type="NCBI Taxonomy" id="45920"/>
    <lineage>
        <taxon>Eukaryota</taxon>
        <taxon>Metazoa</taxon>
        <taxon>Ecdysozoa</taxon>
        <taxon>Arthropoda</taxon>
        <taxon>Chelicerata</taxon>
        <taxon>Arachnida</taxon>
        <taxon>Araneae</taxon>
        <taxon>Araneomorphae</taxon>
        <taxon>Entelegynae</taxon>
        <taxon>Araneoidea</taxon>
        <taxon>Araneidae</taxon>
        <taxon>Araneus</taxon>
    </lineage>
</organism>
<sequence length="159" mass="15683">NPLLATSIINTGSSISARSQDGLGNYAFNYGIGNGLGATNSRAEFGDAAGNKKGSYTITDIDGRARRVDYVADAAGFRASIKTNEPGTALSAPAAAAIVSPYAPPVAPVAPAVAAPVVAAAPALAGAHLLAAPGISSYSSVIGHGAGLYAPGIAKTIFW</sequence>
<comment type="function">
    <text>Component of the rigid cuticle of the spider.</text>
</comment>
<comment type="mass spectrometry" mass="15682.9" method="Electrospray" evidence="2"/>
<accession>P80519</accession>
<feature type="chain" id="PRO_0000196149" description="Adult-specific rigid cuticular protein 15.7">
    <location>
        <begin position="1"/>
        <end position="159"/>
    </location>
</feature>
<feature type="domain" description="Chitin-binding type R&amp;R" evidence="1">
    <location>
        <begin position="23"/>
        <end position="89"/>
    </location>
</feature>
<reference key="1">
    <citation type="journal article" date="1996" name="Insect Biochem. Mol. Biol.">
        <title>Purification and characterization of five cuticular proteins from the spider Araneus diadematus.</title>
        <authorList>
            <person name="Norup T."/>
            <person name="Berg T."/>
            <person name="Stenholm H."/>
            <person name="Andersen S.O."/>
            <person name="Hoejrup P."/>
        </authorList>
    </citation>
    <scope>PROTEIN SEQUENCE</scope>
    <scope>MASS SPECTROMETRY</scope>
    <source>
        <tissue>Cuticle</tissue>
    </source>
</reference>
<protein>
    <recommendedName>
        <fullName>Adult-specific rigid cuticular protein 15.7</fullName>
        <shortName>ACP 15.7</shortName>
    </recommendedName>
</protein>
<proteinExistence type="evidence at protein level"/>
<keyword id="KW-0193">Cuticle</keyword>
<keyword id="KW-0903">Direct protein sequencing</keyword>